<evidence type="ECO:0000250" key="1"/>
<evidence type="ECO:0000255" key="2">
    <source>
        <dbReference type="PROSITE-ProRule" id="PRU00253"/>
    </source>
</evidence>
<evidence type="ECO:0000256" key="3">
    <source>
        <dbReference type="SAM" id="MobiDB-lite"/>
    </source>
</evidence>
<evidence type="ECO:0000305" key="4"/>
<comment type="function">
    <text evidence="1">Trans-acting transcriptional regulator of RuBisCO genes (rbcL and rbcS) expression.</text>
</comment>
<comment type="similarity">
    <text evidence="4">Belongs to the LysR transcriptional regulatory family.</text>
</comment>
<keyword id="KW-0238">DNA-binding</keyword>
<keyword id="KW-1185">Reference proteome</keyword>
<keyword id="KW-0804">Transcription</keyword>
<keyword id="KW-0805">Transcription regulation</keyword>
<reference key="1">
    <citation type="journal article" date="1996" name="DNA Res.">
        <title>Sequence analysis of the genome of the unicellular cyanobacterium Synechocystis sp. strain PCC6803. II. Sequence determination of the entire genome and assignment of potential protein-coding regions.</title>
        <authorList>
            <person name="Kaneko T."/>
            <person name="Sato S."/>
            <person name="Kotani H."/>
            <person name="Tanaka A."/>
            <person name="Asamizu E."/>
            <person name="Nakamura Y."/>
            <person name="Miyajima N."/>
            <person name="Hirosawa M."/>
            <person name="Sugiura M."/>
            <person name="Sasamoto S."/>
            <person name="Kimura T."/>
            <person name="Hosouchi T."/>
            <person name="Matsuno A."/>
            <person name="Muraki A."/>
            <person name="Nakazaki N."/>
            <person name="Naruo K."/>
            <person name="Okumura S."/>
            <person name="Shimpo S."/>
            <person name="Takeuchi C."/>
            <person name="Wada T."/>
            <person name="Watanabe A."/>
            <person name="Yamada M."/>
            <person name="Yasuda M."/>
            <person name="Tabata S."/>
        </authorList>
    </citation>
    <scope>NUCLEOTIDE SEQUENCE [LARGE SCALE GENOMIC DNA]</scope>
    <source>
        <strain>ATCC 27184 / PCC 6803 / Kazusa</strain>
    </source>
</reference>
<protein>
    <recommendedName>
        <fullName>Probable RuBisCO transcriptional regulator</fullName>
    </recommendedName>
</protein>
<organism>
    <name type="scientific">Synechocystis sp. (strain ATCC 27184 / PCC 6803 / Kazusa)</name>
    <dbReference type="NCBI Taxonomy" id="1111708"/>
    <lineage>
        <taxon>Bacteria</taxon>
        <taxon>Bacillati</taxon>
        <taxon>Cyanobacteriota</taxon>
        <taxon>Cyanophyceae</taxon>
        <taxon>Synechococcales</taxon>
        <taxon>Merismopediaceae</taxon>
        <taxon>Synechocystis</taxon>
    </lineage>
</organism>
<proteinExistence type="inferred from homology"/>
<name>RBCR_SYNY3</name>
<accession>P73123</accession>
<dbReference type="EMBL" id="BA000022">
    <property type="protein sequence ID" value="BAA17149.1"/>
    <property type="molecule type" value="Genomic_DNA"/>
</dbReference>
<dbReference type="PIR" id="S75235">
    <property type="entry name" value="S75235"/>
</dbReference>
<dbReference type="SMR" id="P73123"/>
<dbReference type="STRING" id="1148.gene:10498010"/>
<dbReference type="PaxDb" id="1148-1652226"/>
<dbReference type="EnsemblBacteria" id="BAA17149">
    <property type="protein sequence ID" value="BAA17149"/>
    <property type="gene ID" value="BAA17149"/>
</dbReference>
<dbReference type="KEGG" id="syn:sll0998"/>
<dbReference type="eggNOG" id="COG0583">
    <property type="taxonomic scope" value="Bacteria"/>
</dbReference>
<dbReference type="InParanoid" id="P73123"/>
<dbReference type="PhylomeDB" id="P73123"/>
<dbReference type="Proteomes" id="UP000001425">
    <property type="component" value="Chromosome"/>
</dbReference>
<dbReference type="GO" id="GO:0003700">
    <property type="term" value="F:DNA-binding transcription factor activity"/>
    <property type="evidence" value="ECO:0007669"/>
    <property type="project" value="InterPro"/>
</dbReference>
<dbReference type="GO" id="GO:0000976">
    <property type="term" value="F:transcription cis-regulatory region binding"/>
    <property type="evidence" value="ECO:0000318"/>
    <property type="project" value="GO_Central"/>
</dbReference>
<dbReference type="GO" id="GO:0006355">
    <property type="term" value="P:regulation of DNA-templated transcription"/>
    <property type="evidence" value="ECO:0000318"/>
    <property type="project" value="GO_Central"/>
</dbReference>
<dbReference type="CDD" id="cd08420">
    <property type="entry name" value="PBP2_CysL_like"/>
    <property type="match status" value="1"/>
</dbReference>
<dbReference type="FunFam" id="1.10.10.10:FF:000001">
    <property type="entry name" value="LysR family transcriptional regulator"/>
    <property type="match status" value="1"/>
</dbReference>
<dbReference type="Gene3D" id="3.40.190.290">
    <property type="match status" value="1"/>
</dbReference>
<dbReference type="Gene3D" id="1.10.10.10">
    <property type="entry name" value="Winged helix-like DNA-binding domain superfamily/Winged helix DNA-binding domain"/>
    <property type="match status" value="1"/>
</dbReference>
<dbReference type="InterPro" id="IPR005119">
    <property type="entry name" value="LysR_subst-bd"/>
</dbReference>
<dbReference type="InterPro" id="IPR000847">
    <property type="entry name" value="Tscrpt_reg_HTH_LysR"/>
</dbReference>
<dbReference type="InterPro" id="IPR036388">
    <property type="entry name" value="WH-like_DNA-bd_sf"/>
</dbReference>
<dbReference type="InterPro" id="IPR036390">
    <property type="entry name" value="WH_DNA-bd_sf"/>
</dbReference>
<dbReference type="PANTHER" id="PTHR30126">
    <property type="entry name" value="HTH-TYPE TRANSCRIPTIONAL REGULATOR"/>
    <property type="match status" value="1"/>
</dbReference>
<dbReference type="PANTHER" id="PTHR30126:SF39">
    <property type="entry name" value="HTH-TYPE TRANSCRIPTIONAL REGULATOR CYSL"/>
    <property type="match status" value="1"/>
</dbReference>
<dbReference type="Pfam" id="PF00126">
    <property type="entry name" value="HTH_1"/>
    <property type="match status" value="1"/>
</dbReference>
<dbReference type="Pfam" id="PF03466">
    <property type="entry name" value="LysR_substrate"/>
    <property type="match status" value="1"/>
</dbReference>
<dbReference type="PRINTS" id="PR00039">
    <property type="entry name" value="HTHLYSR"/>
</dbReference>
<dbReference type="SUPFAM" id="SSF53850">
    <property type="entry name" value="Periplasmic binding protein-like II"/>
    <property type="match status" value="1"/>
</dbReference>
<dbReference type="SUPFAM" id="SSF46785">
    <property type="entry name" value="Winged helix' DNA-binding domain"/>
    <property type="match status" value="1"/>
</dbReference>
<dbReference type="PROSITE" id="PS50931">
    <property type="entry name" value="HTH_LYSR"/>
    <property type="match status" value="1"/>
</dbReference>
<feature type="chain" id="PRO_0000280082" description="Probable RuBisCO transcriptional regulator">
    <location>
        <begin position="1"/>
        <end position="345"/>
    </location>
</feature>
<feature type="domain" description="HTH lysR-type" evidence="2">
    <location>
        <begin position="6"/>
        <end position="63"/>
    </location>
</feature>
<feature type="DNA-binding region" description="H-T-H motif" evidence="2">
    <location>
        <begin position="23"/>
        <end position="42"/>
    </location>
</feature>
<feature type="region of interest" description="Disordered" evidence="3">
    <location>
        <begin position="311"/>
        <end position="345"/>
    </location>
</feature>
<feature type="compositionally biased region" description="Basic and acidic residues" evidence="3">
    <location>
        <begin position="328"/>
        <end position="339"/>
    </location>
</feature>
<gene>
    <name type="primary">rbcR</name>
    <name type="ordered locus">sll0998</name>
</gene>
<sequence>MSDIPFTLDQLRILKAIASEGSFKRAADTLYVSQPAVSLQVQNLEKQLSVPLFDRGGRKAQLTEAGHLLLNYGEKIITLCQETCRAIEDLQNLQGGTLIVGASQTTGTYLLPRMIGMFRQQYPDVTVQLQVHSTRRTAWGVANGQVDLAIIGGEVPAELQETLTVLPYAEDELALILPVLHPLAQAETIQKEDLYKLKFISLDSQSTIRKVIDKVLSQGEIDTKRLKIEMELNSIEAIKNAVQSGLGAAFVSTTAIEKELEMNVLHIAPIKNVEIRRVLSVIINPNRYRSKASAAFIREVLPQFSTHPDALDPERLFANPYSSNNGDRQGDGKDGKGSIEIDSVT</sequence>